<accession>P0DM95</accession>
<reference key="1">
    <citation type="journal article" date="2012" name="Nature">
        <title>The bonobo genome compared with the chimpanzee and human genomes.</title>
        <authorList>
            <person name="Prufer K."/>
            <person name="Munch K."/>
            <person name="Hellmann I."/>
            <person name="Akagi K."/>
            <person name="Miller J.R."/>
            <person name="Walenz B."/>
            <person name="Koren S."/>
            <person name="Sutton G."/>
            <person name="Kodira C."/>
            <person name="Winer R."/>
            <person name="Knight J.R."/>
            <person name="Mullikin J.C."/>
            <person name="Meader S.J."/>
            <person name="Ponting C.P."/>
            <person name="Lunter G."/>
            <person name="Higashino S."/>
            <person name="Hobolth A."/>
            <person name="Dutheil J."/>
            <person name="Karakoc E."/>
            <person name="Alkan C."/>
            <person name="Sajjadian S."/>
            <person name="Catacchio C.R."/>
            <person name="Ventura M."/>
            <person name="Marques-Bonet T."/>
            <person name="Eichler E.E."/>
            <person name="Andre C."/>
            <person name="Atencia R."/>
            <person name="Mugisha L."/>
            <person name="Junhold J."/>
            <person name="Patterson N."/>
            <person name="Siebauer M."/>
            <person name="Good J.M."/>
            <person name="Fischer A."/>
            <person name="Ptak S.E."/>
            <person name="Lachmann M."/>
            <person name="Symer D.E."/>
            <person name="Mailund T."/>
            <person name="Schierup M.H."/>
            <person name="Andres A.M."/>
            <person name="Kelso J."/>
            <person name="Paabo S."/>
        </authorList>
    </citation>
    <scope>NUCLEOTIDE SEQUENCE [LARGE SCALE GENOMIC DNA]</scope>
</reference>
<reference key="2">
    <citation type="journal article" date="2009" name="Comp. Biochem. Physiol.">
        <title>Mass spectral analyses of the two major apolipoproteins of great ape high density lipoproteins.</title>
        <authorList>
            <person name="Puppione D.L."/>
            <person name="Della Donna L."/>
            <person name="Laganowsky A.D."/>
            <person name="Bassilian S."/>
            <person name="Souda P."/>
            <person name="Ryder O.A."/>
            <person name="Whitelegge J.P."/>
        </authorList>
    </citation>
    <scope>MASS SPECTROMETRY</scope>
    <scope>SUBUNIT</scope>
</reference>
<reference key="3">
    <citation type="unpublished observations" date="2013-10">
        <authorList>
            <person name="Puppione D.L."/>
        </authorList>
    </citation>
    <scope>IDENTIFICATION</scope>
</reference>
<comment type="function">
    <text>May stabilize HDL (high density lipoprotein) structure by its association with lipids, and affect the HDL metabolism.</text>
</comment>
<comment type="subunit">
    <text evidence="1 3">Homodimer; disulfide-linked (PubMed:21298813). Interacts with NAXE and NDRG1 (By similarity).</text>
</comment>
<comment type="subcellular location">
    <subcellularLocation>
        <location evidence="1">Secreted</location>
    </subcellularLocation>
</comment>
<comment type="tissue specificity">
    <text>Plasma.</text>
</comment>
<comment type="mass spectrometry" mass="17471.0" error="1.0" method="Electrospray" evidence="3">
    <molecule>Apolipoprotein A-II</molecule>
    <text>Homodimer.</text>
</comment>
<comment type="mass spectrometry" mass="17342.0" method="Electrospray" evidence="3">
    <molecule>Truncated apolipoprotein A-II</molecule>
    <text>Homodimer.</text>
</comment>
<comment type="similarity">
    <text evidence="4">Belongs to the apolipoprotein A2 family.</text>
</comment>
<feature type="signal peptide" evidence="2">
    <location>
        <begin position="1"/>
        <end position="18"/>
    </location>
</feature>
<feature type="chain" id="PRO_0000425356" description="Proapolipoprotein A-II">
    <location>
        <begin position="19"/>
        <end position="100"/>
    </location>
</feature>
<feature type="chain" id="PRO_0000424682" description="Apolipoprotein A-II" evidence="5">
    <location>
        <begin position="24"/>
        <end position="100"/>
    </location>
</feature>
<feature type="chain" id="PRO_0000424750" description="Truncated apolipoprotein A-II" evidence="5">
    <location>
        <begin position="24"/>
        <end position="99"/>
    </location>
</feature>
<feature type="modified residue" description="Methionine sulfoxide" evidence="1">
    <location>
        <position position="49"/>
    </location>
</feature>
<feature type="modified residue" description="Phosphoserine" evidence="1">
    <location>
        <position position="54"/>
    </location>
</feature>
<feature type="modified residue" description="Phosphoserine" evidence="1">
    <location>
        <position position="68"/>
    </location>
</feature>
<gene>
    <name type="primary">APOA2</name>
</gene>
<organism>
    <name type="scientific">Pan paniscus</name>
    <name type="common">Pygmy chimpanzee</name>
    <name type="synonym">Bonobo</name>
    <dbReference type="NCBI Taxonomy" id="9597"/>
    <lineage>
        <taxon>Eukaryota</taxon>
        <taxon>Metazoa</taxon>
        <taxon>Chordata</taxon>
        <taxon>Craniata</taxon>
        <taxon>Vertebrata</taxon>
        <taxon>Euteleostomi</taxon>
        <taxon>Mammalia</taxon>
        <taxon>Eutheria</taxon>
        <taxon>Euarchontoglires</taxon>
        <taxon>Primates</taxon>
        <taxon>Haplorrhini</taxon>
        <taxon>Catarrhini</taxon>
        <taxon>Hominidae</taxon>
        <taxon>Pan</taxon>
    </lineage>
</organism>
<protein>
    <recommendedName>
        <fullName>Apolipoprotein A-II</fullName>
        <shortName>Apo-AII</shortName>
        <shortName>ApoA-II</shortName>
    </recommendedName>
    <alternativeName>
        <fullName>Apolipoprotein A2</fullName>
    </alternativeName>
    <component>
        <recommendedName>
            <fullName>Proapolipoprotein A-II</fullName>
            <shortName>ProapoA-II</shortName>
        </recommendedName>
    </component>
    <component>
        <recommendedName>
            <fullName>Truncated apolipoprotein A-II</fullName>
        </recommendedName>
    </component>
</protein>
<keyword id="KW-0165">Cleavage on pair of basic residues</keyword>
<keyword id="KW-1015">Disulfide bond</keyword>
<keyword id="KW-0345">HDL</keyword>
<keyword id="KW-0445">Lipid transport</keyword>
<keyword id="KW-0558">Oxidation</keyword>
<keyword id="KW-0597">Phosphoprotein</keyword>
<keyword id="KW-1185">Reference proteome</keyword>
<keyword id="KW-0964">Secreted</keyword>
<keyword id="KW-0732">Signal</keyword>
<keyword id="KW-0813">Transport</keyword>
<name>APOA2_PANPA</name>
<proteinExistence type="evidence at protein level"/>
<dbReference type="EMBL" id="AJFE01037512">
    <property type="status" value="NOT_ANNOTATED_CDS"/>
    <property type="molecule type" value="Genomic_DNA"/>
</dbReference>
<dbReference type="RefSeq" id="XP_003811880.1">
    <property type="nucleotide sequence ID" value="XM_003811832.2"/>
</dbReference>
<dbReference type="RefSeq" id="XP_054968362.1">
    <property type="nucleotide sequence ID" value="XM_055112387.2"/>
</dbReference>
<dbReference type="SMR" id="P0DM95"/>
<dbReference type="STRING" id="9597.ENSPPAP00000027762"/>
<dbReference type="Ensembl" id="ENSPPAT00000050602.1">
    <property type="protein sequence ID" value="ENSPPAP00000027759.1"/>
    <property type="gene ID" value="ENSPPAG00000036949.1"/>
</dbReference>
<dbReference type="GeneID" id="100977422"/>
<dbReference type="eggNOG" id="ENOG502SVYZ">
    <property type="taxonomic scope" value="Eukaryota"/>
</dbReference>
<dbReference type="GeneTree" id="ENSGT00390000003306"/>
<dbReference type="OMA" id="LTICSFE"/>
<dbReference type="Proteomes" id="UP000240080">
    <property type="component" value="Chromosome 1"/>
</dbReference>
<dbReference type="Bgee" id="ENSPPAG00000036949">
    <property type="expression patterns" value="Expressed in liver and 4 other cell types or tissues"/>
</dbReference>
<dbReference type="GO" id="GO:0034366">
    <property type="term" value="C:spherical high-density lipoprotein particle"/>
    <property type="evidence" value="ECO:0007669"/>
    <property type="project" value="TreeGrafter"/>
</dbReference>
<dbReference type="GO" id="GO:0120020">
    <property type="term" value="F:cholesterol transfer activity"/>
    <property type="evidence" value="ECO:0007669"/>
    <property type="project" value="TreeGrafter"/>
</dbReference>
<dbReference type="GO" id="GO:0008035">
    <property type="term" value="F:high-density lipoprotein particle binding"/>
    <property type="evidence" value="ECO:0007669"/>
    <property type="project" value="TreeGrafter"/>
</dbReference>
<dbReference type="GO" id="GO:0008289">
    <property type="term" value="F:lipid binding"/>
    <property type="evidence" value="ECO:0007669"/>
    <property type="project" value="InterPro"/>
</dbReference>
<dbReference type="GO" id="GO:0042632">
    <property type="term" value="P:cholesterol homeostasis"/>
    <property type="evidence" value="ECO:0007669"/>
    <property type="project" value="TreeGrafter"/>
</dbReference>
<dbReference type="GO" id="GO:0030301">
    <property type="term" value="P:cholesterol transport"/>
    <property type="evidence" value="ECO:0007669"/>
    <property type="project" value="TreeGrafter"/>
</dbReference>
<dbReference type="GO" id="GO:0042157">
    <property type="term" value="P:lipoprotein metabolic process"/>
    <property type="evidence" value="ECO:0007669"/>
    <property type="project" value="InterPro"/>
</dbReference>
<dbReference type="GO" id="GO:0050766">
    <property type="term" value="P:positive regulation of phagocytosis"/>
    <property type="evidence" value="ECO:0000250"/>
    <property type="project" value="UniProtKB"/>
</dbReference>
<dbReference type="GO" id="GO:0050821">
    <property type="term" value="P:protein stabilization"/>
    <property type="evidence" value="ECO:0000250"/>
    <property type="project" value="UniProtKB"/>
</dbReference>
<dbReference type="Gene3D" id="6.10.250.100">
    <property type="match status" value="1"/>
</dbReference>
<dbReference type="InterPro" id="IPR006801">
    <property type="entry name" value="ApoA-II"/>
</dbReference>
<dbReference type="InterPro" id="IPR036172">
    <property type="entry name" value="ApoA-II_sf"/>
</dbReference>
<dbReference type="PANTHER" id="PTHR11027">
    <property type="entry name" value="APOLIPOPROTEIN A-II"/>
    <property type="match status" value="1"/>
</dbReference>
<dbReference type="PANTHER" id="PTHR11027:SF0">
    <property type="entry name" value="APOLIPOPROTEIN A-II"/>
    <property type="match status" value="1"/>
</dbReference>
<dbReference type="Pfam" id="PF04711">
    <property type="entry name" value="ApoA-II"/>
    <property type="match status" value="1"/>
</dbReference>
<dbReference type="SUPFAM" id="SSF82936">
    <property type="entry name" value="Apolipoprotein A-II"/>
    <property type="match status" value="1"/>
</dbReference>
<sequence length="100" mass="11220">MKLLAATVLLLTICSLEGALVRRQAKEPCVDNLVSQYFQTVTDYGKDLMEKVKSPELQAEAKSYFEKSKEQLTPLIKKAGTELVNFLSYFMELGTQPATQ</sequence>
<evidence type="ECO:0000250" key="1">
    <source>
        <dbReference type="UniProtKB" id="P02652"/>
    </source>
</evidence>
<evidence type="ECO:0000255" key="2"/>
<evidence type="ECO:0000269" key="3">
    <source>
    </source>
</evidence>
<evidence type="ECO:0000305" key="4"/>
<evidence type="ECO:0000305" key="5">
    <source>
    </source>
</evidence>